<name>RL36_MARSD</name>
<sequence>MKVRPSVKKICPKCKVIRRKGVLRVICDNPRHKQRQG</sequence>
<keyword id="KW-1185">Reference proteome</keyword>
<keyword id="KW-0687">Ribonucleoprotein</keyword>
<keyword id="KW-0689">Ribosomal protein</keyword>
<reference key="1">
    <citation type="submission" date="2009-06" db="EMBL/GenBank/DDBJ databases">
        <title>Complete sequence of Desulfovibrio salexigens DSM 2638.</title>
        <authorList>
            <consortium name="US DOE Joint Genome Institute"/>
            <person name="Lucas S."/>
            <person name="Copeland A."/>
            <person name="Lapidus A."/>
            <person name="Glavina del Rio T."/>
            <person name="Tice H."/>
            <person name="Bruce D."/>
            <person name="Goodwin L."/>
            <person name="Pitluck S."/>
            <person name="Munk A.C."/>
            <person name="Brettin T."/>
            <person name="Detter J.C."/>
            <person name="Han C."/>
            <person name="Tapia R."/>
            <person name="Larimer F."/>
            <person name="Land M."/>
            <person name="Hauser L."/>
            <person name="Kyrpides N."/>
            <person name="Anderson I."/>
            <person name="Wall J.D."/>
            <person name="Arkin A.P."/>
            <person name="Dehal P."/>
            <person name="Chivian D."/>
            <person name="Giles B."/>
            <person name="Hazen T.C."/>
        </authorList>
    </citation>
    <scope>NUCLEOTIDE SEQUENCE [LARGE SCALE GENOMIC DNA]</scope>
    <source>
        <strain>ATCC 14822 / DSM 2638 / NCIMB 8403 / VKM B-1763</strain>
    </source>
</reference>
<accession>C6C1A7</accession>
<gene>
    <name evidence="1" type="primary">rpmJ</name>
    <name type="ordered locus">Desal_1207</name>
</gene>
<protein>
    <recommendedName>
        <fullName evidence="1">Large ribosomal subunit protein bL36</fullName>
    </recommendedName>
    <alternativeName>
        <fullName evidence="2">50S ribosomal protein L36</fullName>
    </alternativeName>
</protein>
<dbReference type="EMBL" id="CP001649">
    <property type="protein sequence ID" value="ACS79270.1"/>
    <property type="molecule type" value="Genomic_DNA"/>
</dbReference>
<dbReference type="SMR" id="C6C1A7"/>
<dbReference type="STRING" id="526222.Desal_1207"/>
<dbReference type="KEGG" id="dsa:Desal_1207"/>
<dbReference type="eggNOG" id="COG0257">
    <property type="taxonomic scope" value="Bacteria"/>
</dbReference>
<dbReference type="HOGENOM" id="CLU_135723_6_2_7"/>
<dbReference type="OrthoDB" id="9802520at2"/>
<dbReference type="Proteomes" id="UP000002601">
    <property type="component" value="Chromosome"/>
</dbReference>
<dbReference type="GO" id="GO:0005737">
    <property type="term" value="C:cytoplasm"/>
    <property type="evidence" value="ECO:0007669"/>
    <property type="project" value="UniProtKB-ARBA"/>
</dbReference>
<dbReference type="GO" id="GO:1990904">
    <property type="term" value="C:ribonucleoprotein complex"/>
    <property type="evidence" value="ECO:0007669"/>
    <property type="project" value="UniProtKB-KW"/>
</dbReference>
<dbReference type="GO" id="GO:0005840">
    <property type="term" value="C:ribosome"/>
    <property type="evidence" value="ECO:0007669"/>
    <property type="project" value="UniProtKB-KW"/>
</dbReference>
<dbReference type="GO" id="GO:0003735">
    <property type="term" value="F:structural constituent of ribosome"/>
    <property type="evidence" value="ECO:0007669"/>
    <property type="project" value="InterPro"/>
</dbReference>
<dbReference type="GO" id="GO:0006412">
    <property type="term" value="P:translation"/>
    <property type="evidence" value="ECO:0007669"/>
    <property type="project" value="UniProtKB-UniRule"/>
</dbReference>
<dbReference type="HAMAP" id="MF_00251">
    <property type="entry name" value="Ribosomal_bL36"/>
    <property type="match status" value="1"/>
</dbReference>
<dbReference type="InterPro" id="IPR000473">
    <property type="entry name" value="Ribosomal_bL36"/>
</dbReference>
<dbReference type="InterPro" id="IPR035977">
    <property type="entry name" value="Ribosomal_bL36_sp"/>
</dbReference>
<dbReference type="NCBIfam" id="TIGR01022">
    <property type="entry name" value="rpmJ_bact"/>
    <property type="match status" value="1"/>
</dbReference>
<dbReference type="PANTHER" id="PTHR42888">
    <property type="entry name" value="50S RIBOSOMAL PROTEIN L36, CHLOROPLASTIC"/>
    <property type="match status" value="1"/>
</dbReference>
<dbReference type="PANTHER" id="PTHR42888:SF1">
    <property type="entry name" value="LARGE RIBOSOMAL SUBUNIT PROTEIN BL36C"/>
    <property type="match status" value="1"/>
</dbReference>
<dbReference type="Pfam" id="PF00444">
    <property type="entry name" value="Ribosomal_L36"/>
    <property type="match status" value="1"/>
</dbReference>
<dbReference type="SUPFAM" id="SSF57840">
    <property type="entry name" value="Ribosomal protein L36"/>
    <property type="match status" value="1"/>
</dbReference>
<dbReference type="PROSITE" id="PS00828">
    <property type="entry name" value="RIBOSOMAL_L36"/>
    <property type="match status" value="1"/>
</dbReference>
<feature type="chain" id="PRO_1000204545" description="Large ribosomal subunit protein bL36">
    <location>
        <begin position="1"/>
        <end position="37"/>
    </location>
</feature>
<proteinExistence type="inferred from homology"/>
<organism>
    <name type="scientific">Maridesulfovibrio salexigens (strain ATCC 14822 / DSM 2638 / NCIMB 8403 / VKM B-1763)</name>
    <name type="common">Desulfovibrio salexigens</name>
    <dbReference type="NCBI Taxonomy" id="526222"/>
    <lineage>
        <taxon>Bacteria</taxon>
        <taxon>Pseudomonadati</taxon>
        <taxon>Thermodesulfobacteriota</taxon>
        <taxon>Desulfovibrionia</taxon>
        <taxon>Desulfovibrionales</taxon>
        <taxon>Desulfovibrionaceae</taxon>
        <taxon>Maridesulfovibrio</taxon>
    </lineage>
</organism>
<comment type="similarity">
    <text evidence="1">Belongs to the bacterial ribosomal protein bL36 family.</text>
</comment>
<evidence type="ECO:0000255" key="1">
    <source>
        <dbReference type="HAMAP-Rule" id="MF_00251"/>
    </source>
</evidence>
<evidence type="ECO:0000305" key="2"/>